<protein>
    <recommendedName>
        <fullName evidence="1">Carbamoyl phosphate synthase large chain</fullName>
        <ecNumber evidence="1">6.3.4.16</ecNumber>
        <ecNumber evidence="1">6.3.5.5</ecNumber>
    </recommendedName>
    <alternativeName>
        <fullName evidence="1">Carbamoyl phosphate synthetase ammonia chain</fullName>
    </alternativeName>
</protein>
<comment type="function">
    <text evidence="1">Large subunit of the glutamine-dependent carbamoyl phosphate synthetase (CPSase). CPSase catalyzes the formation of carbamoyl phosphate from the ammonia moiety of glutamine, carbonate, and phosphate donated by ATP, constituting the first step of 2 biosynthetic pathways, one leading to arginine and/or urea and the other to pyrimidine nucleotides. The large subunit (synthetase) binds the substrates ammonia (free or transferred from glutamine from the small subunit), hydrogencarbonate and ATP and carries out an ATP-coupled ligase reaction, activating hydrogencarbonate by forming carboxy phosphate which reacts with ammonia to form carbamoyl phosphate.</text>
</comment>
<comment type="catalytic activity">
    <reaction evidence="1">
        <text>hydrogencarbonate + L-glutamine + 2 ATP + H2O = carbamoyl phosphate + L-glutamate + 2 ADP + phosphate + 2 H(+)</text>
        <dbReference type="Rhea" id="RHEA:18633"/>
        <dbReference type="ChEBI" id="CHEBI:15377"/>
        <dbReference type="ChEBI" id="CHEBI:15378"/>
        <dbReference type="ChEBI" id="CHEBI:17544"/>
        <dbReference type="ChEBI" id="CHEBI:29985"/>
        <dbReference type="ChEBI" id="CHEBI:30616"/>
        <dbReference type="ChEBI" id="CHEBI:43474"/>
        <dbReference type="ChEBI" id="CHEBI:58228"/>
        <dbReference type="ChEBI" id="CHEBI:58359"/>
        <dbReference type="ChEBI" id="CHEBI:456216"/>
        <dbReference type="EC" id="6.3.5.5"/>
    </reaction>
</comment>
<comment type="catalytic activity">
    <molecule>Carbamoyl phosphate synthase large chain</molecule>
    <reaction evidence="1">
        <text>hydrogencarbonate + NH4(+) + 2 ATP = carbamoyl phosphate + 2 ADP + phosphate + 2 H(+)</text>
        <dbReference type="Rhea" id="RHEA:18029"/>
        <dbReference type="ChEBI" id="CHEBI:15378"/>
        <dbReference type="ChEBI" id="CHEBI:17544"/>
        <dbReference type="ChEBI" id="CHEBI:28938"/>
        <dbReference type="ChEBI" id="CHEBI:30616"/>
        <dbReference type="ChEBI" id="CHEBI:43474"/>
        <dbReference type="ChEBI" id="CHEBI:58228"/>
        <dbReference type="ChEBI" id="CHEBI:456216"/>
        <dbReference type="EC" id="6.3.4.16"/>
    </reaction>
</comment>
<comment type="cofactor">
    <cofactor evidence="1">
        <name>Mg(2+)</name>
        <dbReference type="ChEBI" id="CHEBI:18420"/>
    </cofactor>
    <cofactor evidence="1">
        <name>Mn(2+)</name>
        <dbReference type="ChEBI" id="CHEBI:29035"/>
    </cofactor>
    <text evidence="1">Binds 4 Mg(2+) or Mn(2+) ions per subunit.</text>
</comment>
<comment type="pathway">
    <text evidence="1">Amino-acid biosynthesis; L-arginine biosynthesis; carbamoyl phosphate from bicarbonate: step 1/1.</text>
</comment>
<comment type="pathway">
    <text evidence="1">Pyrimidine metabolism; UMP biosynthesis via de novo pathway; (S)-dihydroorotate from bicarbonate: step 1/3.</text>
</comment>
<comment type="subunit">
    <text evidence="1">Composed of two chains; the small (or glutamine) chain promotes the hydrolysis of glutamine to ammonia, which is used by the large (or ammonia) chain to synthesize carbamoyl phosphate. Tetramer of heterodimers (alpha,beta)4.</text>
</comment>
<comment type="domain">
    <text evidence="1">The large subunit is composed of 2 ATP-grasp domains that are involved in binding the 2 ATP molecules needed for carbamoyl phosphate synthesis. The N-terminal ATP-grasp domain (referred to as the carboxyphosphate synthetic component) catalyzes the ATP-dependent phosphorylation of hydrogencarbonate to carboxyphosphate and the subsequent nucleophilic attack by ammonia to form a carbamate intermediate. The C-terminal ATP-grasp domain (referred to as the carbamoyl phosphate synthetic component) then catalyzes the phosphorylation of carbamate with the second ATP to form the end product carbamoyl phosphate. The reactive and unstable enzyme intermediates are sequentially channeled from one active site to the next through the interior of the protein over a distance of at least 96 A.</text>
</comment>
<comment type="similarity">
    <text evidence="1">Belongs to the CarB family.</text>
</comment>
<name>CARB_DEIGD</name>
<sequence length="1029" mass="112068">MPKRTDLQTILILGSGPIQIGQAAEFDYSGTQALKALKKEGYRVVLVNSNPATIMTDPDLADATYLEPLTPEFVRKVIEKERPDALLPTLGGQTALNLAMELNANGTLKEFGVELIGANAEAIHKGEDREAFQAAMKKIGVETARGKMVHSLEEAIEYQKEIGLPIVIRPSFTLGGTGGGIAHTYEDFLKITEGGLRDSPVHSVLLEESILGWKEYELEVMRDHADTVVIITSIENFDPMGVHTGDSITVAPAQTLSDVEYQRLRDYSLAIIREIGVDTGGSNIQFAVNPENGRVIVIEMNPRVSRSSALASKATGFPIAKIAALLAVGYHLDELPNDITRVTPAAFEPTIDYVVTKIPRFAFEKFPGTPDALGTQMRSVGEVMAIGRTFKESLQKALRSTESDVRGAFAEMSTEDLRGLLYGNPRRLEAVIELLRRGEGVPAVHDATKIDPWFLSQIQEIVDAEKELLNLGPITEWKYELWREVKRLGFSDARIGEIVGLPELEVRALRKAAKATPVYKTVDTCAAEFEAYTPYHYSTYEWEDEVTPTDKPKVVILGSGPNRIGQGVEFDYATVHAVWALQEAGYETIMINSNPETVSTDYDTADRLYFEPLTFEDVMNIVEHEKPVGVIVQLGGQTPLKLAKRLAEAGAPIIGTLPETIHQAEDRASFNALCERLGLPQPRGKVAQTPEQARELAAELGFPLMVRPSYVLGGRAMRTVRSMEELTTYLDEVYAAVEGQPSILLDQFLEGALELDVDTLCDGERAVVAGIMEHVEAAGVHSGDSACVLPPVTLSPELLERVKADTERLALELGVKGLLNVQWAVKDGVAYILEANPRASRTVPFVSKAVNHPLAKYAARIAVGQTLEQIGFTETPLPDLYAVKEVHLPFLKFKGVSPILGPEMKSTGESMGIDTDPYLAYYRAELGAKSNLPLSGTALLLGDGLDGVAATLESAGLRVIHEQEGDRLPDLLIDVTGSPLLRTALERGVPIVSTREGAEWTAKAIAAAQGKTLGVRSLQAWQQREAAAS</sequence>
<keyword id="KW-0028">Amino-acid biosynthesis</keyword>
<keyword id="KW-0055">Arginine biosynthesis</keyword>
<keyword id="KW-0067">ATP-binding</keyword>
<keyword id="KW-0436">Ligase</keyword>
<keyword id="KW-0460">Magnesium</keyword>
<keyword id="KW-0464">Manganese</keyword>
<keyword id="KW-0479">Metal-binding</keyword>
<keyword id="KW-0547">Nucleotide-binding</keyword>
<keyword id="KW-0665">Pyrimidine biosynthesis</keyword>
<keyword id="KW-0677">Repeat</keyword>
<evidence type="ECO:0000255" key="1">
    <source>
        <dbReference type="HAMAP-Rule" id="MF_01210"/>
    </source>
</evidence>
<feature type="chain" id="PRO_1000066349" description="Carbamoyl phosphate synthase large chain">
    <location>
        <begin position="1"/>
        <end position="1029"/>
    </location>
</feature>
<feature type="domain" description="ATP-grasp 1" evidence="1">
    <location>
        <begin position="133"/>
        <end position="328"/>
    </location>
</feature>
<feature type="domain" description="ATP-grasp 2" evidence="1">
    <location>
        <begin position="671"/>
        <end position="863"/>
    </location>
</feature>
<feature type="domain" description="MGS-like" evidence="1">
    <location>
        <begin position="930"/>
        <end position="1028"/>
    </location>
</feature>
<feature type="region of interest" description="Carboxyphosphate synthetic domain" evidence="1">
    <location>
        <begin position="1"/>
        <end position="402"/>
    </location>
</feature>
<feature type="region of interest" description="Oligomerization domain" evidence="1">
    <location>
        <begin position="403"/>
        <end position="546"/>
    </location>
</feature>
<feature type="region of interest" description="Carbamoyl phosphate synthetic domain" evidence="1">
    <location>
        <begin position="547"/>
        <end position="929"/>
    </location>
</feature>
<feature type="region of interest" description="Allosteric domain" evidence="1">
    <location>
        <begin position="930"/>
        <end position="1029"/>
    </location>
</feature>
<feature type="binding site" evidence="1">
    <location>
        <position position="129"/>
    </location>
    <ligand>
        <name>ATP</name>
        <dbReference type="ChEBI" id="CHEBI:30616"/>
        <label>1</label>
    </ligand>
</feature>
<feature type="binding site" evidence="1">
    <location>
        <position position="169"/>
    </location>
    <ligand>
        <name>ATP</name>
        <dbReference type="ChEBI" id="CHEBI:30616"/>
        <label>1</label>
    </ligand>
</feature>
<feature type="binding site" evidence="1">
    <location>
        <position position="175"/>
    </location>
    <ligand>
        <name>ATP</name>
        <dbReference type="ChEBI" id="CHEBI:30616"/>
        <label>1</label>
    </ligand>
</feature>
<feature type="binding site" evidence="1">
    <location>
        <position position="176"/>
    </location>
    <ligand>
        <name>ATP</name>
        <dbReference type="ChEBI" id="CHEBI:30616"/>
        <label>1</label>
    </ligand>
</feature>
<feature type="binding site" evidence="1">
    <location>
        <position position="208"/>
    </location>
    <ligand>
        <name>ATP</name>
        <dbReference type="ChEBI" id="CHEBI:30616"/>
        <label>1</label>
    </ligand>
</feature>
<feature type="binding site" evidence="1">
    <location>
        <position position="210"/>
    </location>
    <ligand>
        <name>ATP</name>
        <dbReference type="ChEBI" id="CHEBI:30616"/>
        <label>1</label>
    </ligand>
</feature>
<feature type="binding site" evidence="1">
    <location>
        <position position="215"/>
    </location>
    <ligand>
        <name>ATP</name>
        <dbReference type="ChEBI" id="CHEBI:30616"/>
        <label>1</label>
    </ligand>
</feature>
<feature type="binding site" evidence="1">
    <location>
        <position position="241"/>
    </location>
    <ligand>
        <name>ATP</name>
        <dbReference type="ChEBI" id="CHEBI:30616"/>
        <label>1</label>
    </ligand>
</feature>
<feature type="binding site" evidence="1">
    <location>
        <position position="242"/>
    </location>
    <ligand>
        <name>ATP</name>
        <dbReference type="ChEBI" id="CHEBI:30616"/>
        <label>1</label>
    </ligand>
</feature>
<feature type="binding site" evidence="1">
    <location>
        <position position="243"/>
    </location>
    <ligand>
        <name>ATP</name>
        <dbReference type="ChEBI" id="CHEBI:30616"/>
        <label>1</label>
    </ligand>
</feature>
<feature type="binding site" evidence="1">
    <location>
        <position position="285"/>
    </location>
    <ligand>
        <name>ATP</name>
        <dbReference type="ChEBI" id="CHEBI:30616"/>
        <label>1</label>
    </ligand>
</feature>
<feature type="binding site" evidence="1">
    <location>
        <position position="285"/>
    </location>
    <ligand>
        <name>Mg(2+)</name>
        <dbReference type="ChEBI" id="CHEBI:18420"/>
        <label>1</label>
    </ligand>
</feature>
<feature type="binding site" evidence="1">
    <location>
        <position position="285"/>
    </location>
    <ligand>
        <name>Mn(2+)</name>
        <dbReference type="ChEBI" id="CHEBI:29035"/>
        <label>1</label>
    </ligand>
</feature>
<feature type="binding site" evidence="1">
    <location>
        <position position="299"/>
    </location>
    <ligand>
        <name>ATP</name>
        <dbReference type="ChEBI" id="CHEBI:30616"/>
        <label>1</label>
    </ligand>
</feature>
<feature type="binding site" evidence="1">
    <location>
        <position position="299"/>
    </location>
    <ligand>
        <name>Mg(2+)</name>
        <dbReference type="ChEBI" id="CHEBI:18420"/>
        <label>1</label>
    </ligand>
</feature>
<feature type="binding site" evidence="1">
    <location>
        <position position="299"/>
    </location>
    <ligand>
        <name>Mg(2+)</name>
        <dbReference type="ChEBI" id="CHEBI:18420"/>
        <label>2</label>
    </ligand>
</feature>
<feature type="binding site" evidence="1">
    <location>
        <position position="299"/>
    </location>
    <ligand>
        <name>Mn(2+)</name>
        <dbReference type="ChEBI" id="CHEBI:29035"/>
        <label>1</label>
    </ligand>
</feature>
<feature type="binding site" evidence="1">
    <location>
        <position position="299"/>
    </location>
    <ligand>
        <name>Mn(2+)</name>
        <dbReference type="ChEBI" id="CHEBI:29035"/>
        <label>2</label>
    </ligand>
</feature>
<feature type="binding site" evidence="1">
    <location>
        <position position="301"/>
    </location>
    <ligand>
        <name>Mg(2+)</name>
        <dbReference type="ChEBI" id="CHEBI:18420"/>
        <label>2</label>
    </ligand>
</feature>
<feature type="binding site" evidence="1">
    <location>
        <position position="301"/>
    </location>
    <ligand>
        <name>Mn(2+)</name>
        <dbReference type="ChEBI" id="CHEBI:29035"/>
        <label>2</label>
    </ligand>
</feature>
<feature type="binding site" evidence="1">
    <location>
        <position position="707"/>
    </location>
    <ligand>
        <name>ATP</name>
        <dbReference type="ChEBI" id="CHEBI:30616"/>
        <label>2</label>
    </ligand>
</feature>
<feature type="binding site" evidence="1">
    <location>
        <position position="747"/>
    </location>
    <ligand>
        <name>ATP</name>
        <dbReference type="ChEBI" id="CHEBI:30616"/>
        <label>2</label>
    </ligand>
</feature>
<feature type="binding site" evidence="1">
    <location>
        <position position="749"/>
    </location>
    <ligand>
        <name>ATP</name>
        <dbReference type="ChEBI" id="CHEBI:30616"/>
        <label>2</label>
    </ligand>
</feature>
<feature type="binding site" evidence="1">
    <location>
        <position position="754"/>
    </location>
    <ligand>
        <name>ATP</name>
        <dbReference type="ChEBI" id="CHEBI:30616"/>
        <label>2</label>
    </ligand>
</feature>
<feature type="binding site" evidence="1">
    <location>
        <position position="779"/>
    </location>
    <ligand>
        <name>ATP</name>
        <dbReference type="ChEBI" id="CHEBI:30616"/>
        <label>2</label>
    </ligand>
</feature>
<feature type="binding site" evidence="1">
    <location>
        <position position="780"/>
    </location>
    <ligand>
        <name>ATP</name>
        <dbReference type="ChEBI" id="CHEBI:30616"/>
        <label>2</label>
    </ligand>
</feature>
<feature type="binding site" evidence="1">
    <location>
        <position position="781"/>
    </location>
    <ligand>
        <name>ATP</name>
        <dbReference type="ChEBI" id="CHEBI:30616"/>
        <label>2</label>
    </ligand>
</feature>
<feature type="binding site" evidence="1">
    <location>
        <position position="782"/>
    </location>
    <ligand>
        <name>ATP</name>
        <dbReference type="ChEBI" id="CHEBI:30616"/>
        <label>2</label>
    </ligand>
</feature>
<feature type="binding site" evidence="1">
    <location>
        <position position="822"/>
    </location>
    <ligand>
        <name>ATP</name>
        <dbReference type="ChEBI" id="CHEBI:30616"/>
        <label>2</label>
    </ligand>
</feature>
<feature type="binding site" evidence="1">
    <location>
        <position position="822"/>
    </location>
    <ligand>
        <name>Mg(2+)</name>
        <dbReference type="ChEBI" id="CHEBI:18420"/>
        <label>3</label>
    </ligand>
</feature>
<feature type="binding site" evidence="1">
    <location>
        <position position="822"/>
    </location>
    <ligand>
        <name>Mn(2+)</name>
        <dbReference type="ChEBI" id="CHEBI:29035"/>
        <label>3</label>
    </ligand>
</feature>
<feature type="binding site" evidence="1">
    <location>
        <position position="834"/>
    </location>
    <ligand>
        <name>ATP</name>
        <dbReference type="ChEBI" id="CHEBI:30616"/>
        <label>2</label>
    </ligand>
</feature>
<feature type="binding site" evidence="1">
    <location>
        <position position="834"/>
    </location>
    <ligand>
        <name>Mg(2+)</name>
        <dbReference type="ChEBI" id="CHEBI:18420"/>
        <label>3</label>
    </ligand>
</feature>
<feature type="binding site" evidence="1">
    <location>
        <position position="834"/>
    </location>
    <ligand>
        <name>Mg(2+)</name>
        <dbReference type="ChEBI" id="CHEBI:18420"/>
        <label>4</label>
    </ligand>
</feature>
<feature type="binding site" evidence="1">
    <location>
        <position position="834"/>
    </location>
    <ligand>
        <name>Mn(2+)</name>
        <dbReference type="ChEBI" id="CHEBI:29035"/>
        <label>3</label>
    </ligand>
</feature>
<feature type="binding site" evidence="1">
    <location>
        <position position="834"/>
    </location>
    <ligand>
        <name>Mn(2+)</name>
        <dbReference type="ChEBI" id="CHEBI:29035"/>
        <label>4</label>
    </ligand>
</feature>
<feature type="binding site" evidence="1">
    <location>
        <position position="836"/>
    </location>
    <ligand>
        <name>Mg(2+)</name>
        <dbReference type="ChEBI" id="CHEBI:18420"/>
        <label>4</label>
    </ligand>
</feature>
<feature type="binding site" evidence="1">
    <location>
        <position position="836"/>
    </location>
    <ligand>
        <name>Mn(2+)</name>
        <dbReference type="ChEBI" id="CHEBI:29035"/>
        <label>4</label>
    </ligand>
</feature>
<reference key="1">
    <citation type="submission" date="2006-04" db="EMBL/GenBank/DDBJ databases">
        <title>Complete sequence of chromosome of Deinococcus geothermalis DSM 11300.</title>
        <authorList>
            <person name="Copeland A."/>
            <person name="Lucas S."/>
            <person name="Lapidus A."/>
            <person name="Barry K."/>
            <person name="Detter J.C."/>
            <person name="Glavina del Rio T."/>
            <person name="Hammon N."/>
            <person name="Israni S."/>
            <person name="Dalin E."/>
            <person name="Tice H."/>
            <person name="Pitluck S."/>
            <person name="Brettin T."/>
            <person name="Bruce D."/>
            <person name="Han C."/>
            <person name="Tapia R."/>
            <person name="Saunders E."/>
            <person name="Gilna P."/>
            <person name="Schmutz J."/>
            <person name="Larimer F."/>
            <person name="Land M."/>
            <person name="Hauser L."/>
            <person name="Kyrpides N."/>
            <person name="Kim E."/>
            <person name="Daly M.J."/>
            <person name="Fredrickson J.K."/>
            <person name="Makarova K.S."/>
            <person name="Gaidamakova E.K."/>
            <person name="Zhai M."/>
            <person name="Richardson P."/>
        </authorList>
    </citation>
    <scope>NUCLEOTIDE SEQUENCE [LARGE SCALE GENOMIC DNA]</scope>
    <source>
        <strain>DSM 11300 / CIP 105573 / AG-3a</strain>
    </source>
</reference>
<organism>
    <name type="scientific">Deinococcus geothermalis (strain DSM 11300 / CIP 105573 / AG-3a)</name>
    <dbReference type="NCBI Taxonomy" id="319795"/>
    <lineage>
        <taxon>Bacteria</taxon>
        <taxon>Thermotogati</taxon>
        <taxon>Deinococcota</taxon>
        <taxon>Deinococci</taxon>
        <taxon>Deinococcales</taxon>
        <taxon>Deinococcaceae</taxon>
        <taxon>Deinococcus</taxon>
    </lineage>
</organism>
<accession>Q1IWM0</accession>
<dbReference type="EC" id="6.3.4.16" evidence="1"/>
<dbReference type="EC" id="6.3.5.5" evidence="1"/>
<dbReference type="EMBL" id="CP000359">
    <property type="protein sequence ID" value="ABF46364.1"/>
    <property type="molecule type" value="Genomic_DNA"/>
</dbReference>
<dbReference type="RefSeq" id="WP_011531190.1">
    <property type="nucleotide sequence ID" value="NC_008025.1"/>
</dbReference>
<dbReference type="SMR" id="Q1IWM0"/>
<dbReference type="STRING" id="319795.Dgeo_2070"/>
<dbReference type="KEGG" id="dge:Dgeo_2070"/>
<dbReference type="eggNOG" id="COG0458">
    <property type="taxonomic scope" value="Bacteria"/>
</dbReference>
<dbReference type="HOGENOM" id="CLU_000513_1_0_0"/>
<dbReference type="UniPathway" id="UPA00068">
    <property type="reaction ID" value="UER00171"/>
</dbReference>
<dbReference type="UniPathway" id="UPA00070">
    <property type="reaction ID" value="UER00115"/>
</dbReference>
<dbReference type="Proteomes" id="UP000002431">
    <property type="component" value="Chromosome"/>
</dbReference>
<dbReference type="GO" id="GO:0005737">
    <property type="term" value="C:cytoplasm"/>
    <property type="evidence" value="ECO:0007669"/>
    <property type="project" value="TreeGrafter"/>
</dbReference>
<dbReference type="GO" id="GO:0005524">
    <property type="term" value="F:ATP binding"/>
    <property type="evidence" value="ECO:0007669"/>
    <property type="project" value="UniProtKB-UniRule"/>
</dbReference>
<dbReference type="GO" id="GO:0004087">
    <property type="term" value="F:carbamoyl-phosphate synthase (ammonia) activity"/>
    <property type="evidence" value="ECO:0007669"/>
    <property type="project" value="RHEA"/>
</dbReference>
<dbReference type="GO" id="GO:0004088">
    <property type="term" value="F:carbamoyl-phosphate synthase (glutamine-hydrolyzing) activity"/>
    <property type="evidence" value="ECO:0007669"/>
    <property type="project" value="UniProtKB-UniRule"/>
</dbReference>
<dbReference type="GO" id="GO:0046872">
    <property type="term" value="F:metal ion binding"/>
    <property type="evidence" value="ECO:0007669"/>
    <property type="project" value="UniProtKB-KW"/>
</dbReference>
<dbReference type="GO" id="GO:0044205">
    <property type="term" value="P:'de novo' UMP biosynthetic process"/>
    <property type="evidence" value="ECO:0007669"/>
    <property type="project" value="UniProtKB-UniRule"/>
</dbReference>
<dbReference type="GO" id="GO:0006541">
    <property type="term" value="P:glutamine metabolic process"/>
    <property type="evidence" value="ECO:0007669"/>
    <property type="project" value="TreeGrafter"/>
</dbReference>
<dbReference type="GO" id="GO:0006526">
    <property type="term" value="P:L-arginine biosynthetic process"/>
    <property type="evidence" value="ECO:0007669"/>
    <property type="project" value="UniProtKB-UniRule"/>
</dbReference>
<dbReference type="FunFam" id="1.10.1030.10:FF:000002">
    <property type="entry name" value="Carbamoyl-phosphate synthase large chain"/>
    <property type="match status" value="1"/>
</dbReference>
<dbReference type="FunFam" id="3.30.470.20:FF:000007">
    <property type="entry name" value="Carbamoyl-phosphate synthase large chain"/>
    <property type="match status" value="1"/>
</dbReference>
<dbReference type="FunFam" id="3.30.470.20:FF:000013">
    <property type="entry name" value="Carbamoyl-phosphate synthase large chain"/>
    <property type="match status" value="1"/>
</dbReference>
<dbReference type="FunFam" id="3.40.50.20:FF:000001">
    <property type="entry name" value="Carbamoyl-phosphate synthase large chain"/>
    <property type="match status" value="1"/>
</dbReference>
<dbReference type="FunFam" id="3.40.50.20:FF:000003">
    <property type="entry name" value="Carbamoyl-phosphate synthase large chain"/>
    <property type="match status" value="1"/>
</dbReference>
<dbReference type="Gene3D" id="3.40.50.20">
    <property type="match status" value="2"/>
</dbReference>
<dbReference type="Gene3D" id="3.30.470.20">
    <property type="entry name" value="ATP-grasp fold, B domain"/>
    <property type="match status" value="2"/>
</dbReference>
<dbReference type="Gene3D" id="1.10.1030.10">
    <property type="entry name" value="Carbamoyl-phosphate synthetase, large subunit oligomerisation domain"/>
    <property type="match status" value="1"/>
</dbReference>
<dbReference type="HAMAP" id="MF_01210_B">
    <property type="entry name" value="CPSase_L_chain_B"/>
    <property type="match status" value="1"/>
</dbReference>
<dbReference type="InterPro" id="IPR011761">
    <property type="entry name" value="ATP-grasp"/>
</dbReference>
<dbReference type="InterPro" id="IPR006275">
    <property type="entry name" value="CarbamoylP_synth_lsu"/>
</dbReference>
<dbReference type="InterPro" id="IPR005480">
    <property type="entry name" value="CarbamoylP_synth_lsu_oligo"/>
</dbReference>
<dbReference type="InterPro" id="IPR036897">
    <property type="entry name" value="CarbamoylP_synth_lsu_oligo_sf"/>
</dbReference>
<dbReference type="InterPro" id="IPR005479">
    <property type="entry name" value="CbamoylP_synth_lsu-like_ATP-bd"/>
</dbReference>
<dbReference type="InterPro" id="IPR005483">
    <property type="entry name" value="CbamoylP_synth_lsu_CPSase_dom"/>
</dbReference>
<dbReference type="InterPro" id="IPR011607">
    <property type="entry name" value="MGS-like_dom"/>
</dbReference>
<dbReference type="InterPro" id="IPR016185">
    <property type="entry name" value="PreATP-grasp_dom_sf"/>
</dbReference>
<dbReference type="NCBIfam" id="TIGR01369">
    <property type="entry name" value="CPSaseII_lrg"/>
    <property type="match status" value="1"/>
</dbReference>
<dbReference type="NCBIfam" id="NF003671">
    <property type="entry name" value="PRK05294.1"/>
    <property type="match status" value="1"/>
</dbReference>
<dbReference type="NCBIfam" id="NF009455">
    <property type="entry name" value="PRK12815.1"/>
    <property type="match status" value="1"/>
</dbReference>
<dbReference type="PANTHER" id="PTHR11405:SF53">
    <property type="entry name" value="CARBAMOYL-PHOSPHATE SYNTHASE [AMMONIA], MITOCHONDRIAL"/>
    <property type="match status" value="1"/>
</dbReference>
<dbReference type="PANTHER" id="PTHR11405">
    <property type="entry name" value="CARBAMOYLTRANSFERASE FAMILY MEMBER"/>
    <property type="match status" value="1"/>
</dbReference>
<dbReference type="Pfam" id="PF02786">
    <property type="entry name" value="CPSase_L_D2"/>
    <property type="match status" value="2"/>
</dbReference>
<dbReference type="Pfam" id="PF02787">
    <property type="entry name" value="CPSase_L_D3"/>
    <property type="match status" value="1"/>
</dbReference>
<dbReference type="PRINTS" id="PR00098">
    <property type="entry name" value="CPSASE"/>
</dbReference>
<dbReference type="SMART" id="SM01096">
    <property type="entry name" value="CPSase_L_D3"/>
    <property type="match status" value="1"/>
</dbReference>
<dbReference type="SUPFAM" id="SSF48108">
    <property type="entry name" value="Carbamoyl phosphate synthetase, large subunit connection domain"/>
    <property type="match status" value="1"/>
</dbReference>
<dbReference type="SUPFAM" id="SSF56059">
    <property type="entry name" value="Glutathione synthetase ATP-binding domain-like"/>
    <property type="match status" value="2"/>
</dbReference>
<dbReference type="SUPFAM" id="SSF52440">
    <property type="entry name" value="PreATP-grasp domain"/>
    <property type="match status" value="2"/>
</dbReference>
<dbReference type="PROSITE" id="PS50975">
    <property type="entry name" value="ATP_GRASP"/>
    <property type="match status" value="2"/>
</dbReference>
<dbReference type="PROSITE" id="PS00866">
    <property type="entry name" value="CPSASE_1"/>
    <property type="match status" value="1"/>
</dbReference>
<dbReference type="PROSITE" id="PS00867">
    <property type="entry name" value="CPSASE_2"/>
    <property type="match status" value="2"/>
</dbReference>
<dbReference type="PROSITE" id="PS51855">
    <property type="entry name" value="MGS"/>
    <property type="match status" value="1"/>
</dbReference>
<proteinExistence type="inferred from homology"/>
<gene>
    <name evidence="1" type="primary">carB</name>
    <name type="ordered locus">Dgeo_2070</name>
</gene>